<accession>Q71Y44</accession>
<proteinExistence type="inferred from homology"/>
<sequence length="306" mass="33713">MELVFLGTGAGVPSRGRNVTSIALSMLNERNTIWLFDCGEATQHQIMRSQIKLSKLEKIFITHMHGDHIFGLPGLLSSRSFQGGDSNLTIYGPAGIAEYVETSLRLSGTRLTYKINFEEIEPGLIFEDEMFLVTADDLDHGVRSFGYRIVEKDKQGALNAEKLKADGVEAGPVFQKLKNGEIVTLADGRVIDGKNYIGEPQKGKIISIFGDTKETANELELALNADILVHEATFEGDKAKMAGEYMHSTTLQAANLAKTANVKKLILTHISSRYDRDASKELLIEAKTIFENTEIAYDLAVFPIGE</sequence>
<organism>
    <name type="scientific">Listeria monocytogenes serotype 4b (strain F2365)</name>
    <dbReference type="NCBI Taxonomy" id="265669"/>
    <lineage>
        <taxon>Bacteria</taxon>
        <taxon>Bacillati</taxon>
        <taxon>Bacillota</taxon>
        <taxon>Bacilli</taxon>
        <taxon>Bacillales</taxon>
        <taxon>Listeriaceae</taxon>
        <taxon>Listeria</taxon>
    </lineage>
</organism>
<keyword id="KW-0255">Endonuclease</keyword>
<keyword id="KW-0378">Hydrolase</keyword>
<keyword id="KW-0479">Metal-binding</keyword>
<keyword id="KW-0540">Nuclease</keyword>
<keyword id="KW-0819">tRNA processing</keyword>
<keyword id="KW-0862">Zinc</keyword>
<evidence type="ECO:0000255" key="1">
    <source>
        <dbReference type="HAMAP-Rule" id="MF_01818"/>
    </source>
</evidence>
<gene>
    <name evidence="1" type="primary">rnz</name>
    <name type="ordered locus">LMOf2365_2000</name>
</gene>
<feature type="chain" id="PRO_0000155874" description="Ribonuclease Z">
    <location>
        <begin position="1"/>
        <end position="306"/>
    </location>
</feature>
<feature type="active site" description="Proton acceptor" evidence="1">
    <location>
        <position position="67"/>
    </location>
</feature>
<feature type="binding site" evidence="1">
    <location>
        <position position="63"/>
    </location>
    <ligand>
        <name>Zn(2+)</name>
        <dbReference type="ChEBI" id="CHEBI:29105"/>
        <label>1</label>
        <note>catalytic</note>
    </ligand>
</feature>
<feature type="binding site" evidence="1">
    <location>
        <position position="65"/>
    </location>
    <ligand>
        <name>Zn(2+)</name>
        <dbReference type="ChEBI" id="CHEBI:29105"/>
        <label>1</label>
        <note>catalytic</note>
    </ligand>
</feature>
<feature type="binding site" evidence="1">
    <location>
        <position position="67"/>
    </location>
    <ligand>
        <name>Zn(2+)</name>
        <dbReference type="ChEBI" id="CHEBI:29105"/>
        <label>2</label>
        <note>catalytic</note>
    </ligand>
</feature>
<feature type="binding site" evidence="1">
    <location>
        <position position="68"/>
    </location>
    <ligand>
        <name>Zn(2+)</name>
        <dbReference type="ChEBI" id="CHEBI:29105"/>
        <label>2</label>
        <note>catalytic</note>
    </ligand>
</feature>
<feature type="binding site" evidence="1">
    <location>
        <position position="140"/>
    </location>
    <ligand>
        <name>Zn(2+)</name>
        <dbReference type="ChEBI" id="CHEBI:29105"/>
        <label>1</label>
        <note>catalytic</note>
    </ligand>
</feature>
<feature type="binding site" evidence="1">
    <location>
        <position position="211"/>
    </location>
    <ligand>
        <name>Zn(2+)</name>
        <dbReference type="ChEBI" id="CHEBI:29105"/>
        <label>1</label>
        <note>catalytic</note>
    </ligand>
</feature>
<feature type="binding site" evidence="1">
    <location>
        <position position="211"/>
    </location>
    <ligand>
        <name>Zn(2+)</name>
        <dbReference type="ChEBI" id="CHEBI:29105"/>
        <label>2</label>
        <note>catalytic</note>
    </ligand>
</feature>
<feature type="binding site" evidence="1">
    <location>
        <position position="269"/>
    </location>
    <ligand>
        <name>Zn(2+)</name>
        <dbReference type="ChEBI" id="CHEBI:29105"/>
        <label>2</label>
        <note>catalytic</note>
    </ligand>
</feature>
<comment type="function">
    <text evidence="1">Zinc phosphodiesterase, which displays some tRNA 3'-processing endonuclease activity. Probably involved in tRNA maturation, by removing a 3'-trailer from precursor tRNA.</text>
</comment>
<comment type="catalytic activity">
    <reaction evidence="1">
        <text>Endonucleolytic cleavage of RNA, removing extra 3' nucleotides from tRNA precursor, generating 3' termini of tRNAs. A 3'-hydroxy group is left at the tRNA terminus and a 5'-phosphoryl group is left at the trailer molecule.</text>
        <dbReference type="EC" id="3.1.26.11"/>
    </reaction>
</comment>
<comment type="cofactor">
    <cofactor evidence="1">
        <name>Zn(2+)</name>
        <dbReference type="ChEBI" id="CHEBI:29105"/>
    </cofactor>
    <text evidence="1">Binds 2 Zn(2+) ions.</text>
</comment>
<comment type="subunit">
    <text evidence="1">Homodimer.</text>
</comment>
<comment type="similarity">
    <text evidence="1">Belongs to the RNase Z family.</text>
</comment>
<name>RNZ_LISMF</name>
<protein>
    <recommendedName>
        <fullName evidence="1">Ribonuclease Z</fullName>
        <shortName evidence="1">RNase Z</shortName>
        <ecNumber evidence="1">3.1.26.11</ecNumber>
    </recommendedName>
    <alternativeName>
        <fullName evidence="1">tRNA 3 endonuclease</fullName>
    </alternativeName>
    <alternativeName>
        <fullName evidence="1">tRNase Z</fullName>
    </alternativeName>
</protein>
<reference key="1">
    <citation type="journal article" date="2004" name="Nucleic Acids Res.">
        <title>Whole genome comparisons of serotype 4b and 1/2a strains of the food-borne pathogen Listeria monocytogenes reveal new insights into the core genome components of this species.</title>
        <authorList>
            <person name="Nelson K.E."/>
            <person name="Fouts D.E."/>
            <person name="Mongodin E.F."/>
            <person name="Ravel J."/>
            <person name="DeBoy R.T."/>
            <person name="Kolonay J.F."/>
            <person name="Rasko D.A."/>
            <person name="Angiuoli S.V."/>
            <person name="Gill S.R."/>
            <person name="Paulsen I.T."/>
            <person name="Peterson J.D."/>
            <person name="White O."/>
            <person name="Nelson W.C."/>
            <person name="Nierman W.C."/>
            <person name="Beanan M.J."/>
            <person name="Brinkac L.M."/>
            <person name="Daugherty S.C."/>
            <person name="Dodson R.J."/>
            <person name="Durkin A.S."/>
            <person name="Madupu R."/>
            <person name="Haft D.H."/>
            <person name="Selengut J."/>
            <person name="Van Aken S.E."/>
            <person name="Khouri H.M."/>
            <person name="Fedorova N."/>
            <person name="Forberger H.A."/>
            <person name="Tran B."/>
            <person name="Kathariou S."/>
            <person name="Wonderling L.D."/>
            <person name="Uhlich G.A."/>
            <person name="Bayles D.O."/>
            <person name="Luchansky J.B."/>
            <person name="Fraser C.M."/>
        </authorList>
    </citation>
    <scope>NUCLEOTIDE SEQUENCE [LARGE SCALE GENOMIC DNA]</scope>
    <source>
        <strain>F2365</strain>
    </source>
</reference>
<dbReference type="EC" id="3.1.26.11" evidence="1"/>
<dbReference type="EMBL" id="AE017262">
    <property type="protein sequence ID" value="AAT04770.1"/>
    <property type="molecule type" value="Genomic_DNA"/>
</dbReference>
<dbReference type="RefSeq" id="WP_003725869.1">
    <property type="nucleotide sequence ID" value="NC_002973.6"/>
</dbReference>
<dbReference type="SMR" id="Q71Y44"/>
<dbReference type="KEGG" id="lmf:LMOf2365_2000"/>
<dbReference type="HOGENOM" id="CLU_031317_2_0_9"/>
<dbReference type="GO" id="GO:0042781">
    <property type="term" value="F:3'-tRNA processing endoribonuclease activity"/>
    <property type="evidence" value="ECO:0007669"/>
    <property type="project" value="UniProtKB-UniRule"/>
</dbReference>
<dbReference type="GO" id="GO:0008270">
    <property type="term" value="F:zinc ion binding"/>
    <property type="evidence" value="ECO:0007669"/>
    <property type="project" value="UniProtKB-UniRule"/>
</dbReference>
<dbReference type="CDD" id="cd07717">
    <property type="entry name" value="RNaseZ_ZiPD-like_MBL-fold"/>
    <property type="match status" value="1"/>
</dbReference>
<dbReference type="FunFam" id="3.60.15.10:FF:000002">
    <property type="entry name" value="Ribonuclease Z"/>
    <property type="match status" value="1"/>
</dbReference>
<dbReference type="Gene3D" id="3.60.15.10">
    <property type="entry name" value="Ribonuclease Z/Hydroxyacylglutathione hydrolase-like"/>
    <property type="match status" value="1"/>
</dbReference>
<dbReference type="HAMAP" id="MF_01818">
    <property type="entry name" value="RNase_Z_BN"/>
    <property type="match status" value="1"/>
</dbReference>
<dbReference type="InterPro" id="IPR001279">
    <property type="entry name" value="Metallo-B-lactamas"/>
</dbReference>
<dbReference type="InterPro" id="IPR036866">
    <property type="entry name" value="RibonucZ/Hydroxyglut_hydro"/>
</dbReference>
<dbReference type="InterPro" id="IPR013471">
    <property type="entry name" value="RNase_Z/BN"/>
</dbReference>
<dbReference type="NCBIfam" id="NF000800">
    <property type="entry name" value="PRK00055.1-1"/>
    <property type="match status" value="1"/>
</dbReference>
<dbReference type="NCBIfam" id="NF000801">
    <property type="entry name" value="PRK00055.1-3"/>
    <property type="match status" value="1"/>
</dbReference>
<dbReference type="NCBIfam" id="TIGR02651">
    <property type="entry name" value="RNase_Z"/>
    <property type="match status" value="1"/>
</dbReference>
<dbReference type="PANTHER" id="PTHR46018">
    <property type="entry name" value="ZINC PHOSPHODIESTERASE ELAC PROTEIN 1"/>
    <property type="match status" value="1"/>
</dbReference>
<dbReference type="PANTHER" id="PTHR46018:SF2">
    <property type="entry name" value="ZINC PHOSPHODIESTERASE ELAC PROTEIN 1"/>
    <property type="match status" value="1"/>
</dbReference>
<dbReference type="Pfam" id="PF12706">
    <property type="entry name" value="Lactamase_B_2"/>
    <property type="match status" value="1"/>
</dbReference>
<dbReference type="SMART" id="SM00849">
    <property type="entry name" value="Lactamase_B"/>
    <property type="match status" value="1"/>
</dbReference>
<dbReference type="SUPFAM" id="SSF56281">
    <property type="entry name" value="Metallo-hydrolase/oxidoreductase"/>
    <property type="match status" value="1"/>
</dbReference>